<reference key="1">
    <citation type="journal article" date="2011" name="J. Proteome Res.">
        <title>Identification of novel proteins from the venom of a cryptic snake Drysdalia coronoides by a combined transcriptomics and proteomics approach.</title>
        <authorList>
            <person name="Chatrath S.T."/>
            <person name="Chapeaurouge A."/>
            <person name="Lin Q."/>
            <person name="Lim T.K."/>
            <person name="Dunstan N."/>
            <person name="Mirtschin P."/>
            <person name="Kumar P.P."/>
            <person name="Kini R.M."/>
        </authorList>
    </citation>
    <scope>NUCLEOTIDE SEQUENCE [MRNA]</scope>
    <scope>IDENTIFICATION BY MASS SPECTROMETRY</scope>
    <source>
        <tissue>Venom</tissue>
        <tissue>Venom gland</tissue>
    </source>
</reference>
<organism>
    <name type="scientific">Drysdalia coronoides</name>
    <name type="common">White-lipped snake</name>
    <name type="synonym">Hoplocephalus coronoides</name>
    <dbReference type="NCBI Taxonomy" id="66186"/>
    <lineage>
        <taxon>Eukaryota</taxon>
        <taxon>Metazoa</taxon>
        <taxon>Chordata</taxon>
        <taxon>Craniata</taxon>
        <taxon>Vertebrata</taxon>
        <taxon>Euteleostomi</taxon>
        <taxon>Lepidosauria</taxon>
        <taxon>Squamata</taxon>
        <taxon>Bifurcata</taxon>
        <taxon>Unidentata</taxon>
        <taxon>Episquamata</taxon>
        <taxon>Toxicofera</taxon>
        <taxon>Serpentes</taxon>
        <taxon>Colubroidea</taxon>
        <taxon>Elapidae</taxon>
        <taxon>Notechinae</taxon>
        <taxon>Drysdalia</taxon>
    </lineage>
</organism>
<dbReference type="EC" id="3.1.1.4"/>
<dbReference type="EMBL" id="FJ752450">
    <property type="protein sequence ID" value="ACR78472.1"/>
    <property type="molecule type" value="mRNA"/>
</dbReference>
<dbReference type="SMR" id="F8J2D2"/>
<dbReference type="GO" id="GO:0005576">
    <property type="term" value="C:extracellular region"/>
    <property type="evidence" value="ECO:0007669"/>
    <property type="project" value="UniProtKB-SubCell"/>
</dbReference>
<dbReference type="GO" id="GO:0005509">
    <property type="term" value="F:calcium ion binding"/>
    <property type="evidence" value="ECO:0007669"/>
    <property type="project" value="InterPro"/>
</dbReference>
<dbReference type="GO" id="GO:0047498">
    <property type="term" value="F:calcium-dependent phospholipase A2 activity"/>
    <property type="evidence" value="ECO:0007669"/>
    <property type="project" value="TreeGrafter"/>
</dbReference>
<dbReference type="GO" id="GO:0005543">
    <property type="term" value="F:phospholipid binding"/>
    <property type="evidence" value="ECO:0007669"/>
    <property type="project" value="TreeGrafter"/>
</dbReference>
<dbReference type="GO" id="GO:0090729">
    <property type="term" value="F:toxin activity"/>
    <property type="evidence" value="ECO:0007669"/>
    <property type="project" value="UniProtKB-KW"/>
</dbReference>
<dbReference type="GO" id="GO:0050482">
    <property type="term" value="P:arachidonate secretion"/>
    <property type="evidence" value="ECO:0007669"/>
    <property type="project" value="InterPro"/>
</dbReference>
<dbReference type="GO" id="GO:0016042">
    <property type="term" value="P:lipid catabolic process"/>
    <property type="evidence" value="ECO:0007669"/>
    <property type="project" value="UniProtKB-KW"/>
</dbReference>
<dbReference type="GO" id="GO:0006644">
    <property type="term" value="P:phospholipid metabolic process"/>
    <property type="evidence" value="ECO:0007669"/>
    <property type="project" value="InterPro"/>
</dbReference>
<dbReference type="CDD" id="cd00125">
    <property type="entry name" value="PLA2c"/>
    <property type="match status" value="1"/>
</dbReference>
<dbReference type="FunFam" id="1.20.90.10:FF:000007">
    <property type="entry name" value="Acidic phospholipase A2"/>
    <property type="match status" value="1"/>
</dbReference>
<dbReference type="Gene3D" id="1.20.90.10">
    <property type="entry name" value="Phospholipase A2 domain"/>
    <property type="match status" value="1"/>
</dbReference>
<dbReference type="InterPro" id="IPR001211">
    <property type="entry name" value="PLipase_A2"/>
</dbReference>
<dbReference type="InterPro" id="IPR033112">
    <property type="entry name" value="PLipase_A2_Asp_AS"/>
</dbReference>
<dbReference type="InterPro" id="IPR016090">
    <property type="entry name" value="PLipase_A2_dom"/>
</dbReference>
<dbReference type="InterPro" id="IPR036444">
    <property type="entry name" value="PLipase_A2_dom_sf"/>
</dbReference>
<dbReference type="InterPro" id="IPR033113">
    <property type="entry name" value="PLipase_A2_His_AS"/>
</dbReference>
<dbReference type="PANTHER" id="PTHR11716:SF51">
    <property type="entry name" value="PHOSPHOLIPASE A2"/>
    <property type="match status" value="1"/>
</dbReference>
<dbReference type="PANTHER" id="PTHR11716">
    <property type="entry name" value="PHOSPHOLIPASE A2 FAMILY MEMBER"/>
    <property type="match status" value="1"/>
</dbReference>
<dbReference type="Pfam" id="PF00068">
    <property type="entry name" value="Phospholip_A2_1"/>
    <property type="match status" value="1"/>
</dbReference>
<dbReference type="PRINTS" id="PR00389">
    <property type="entry name" value="PHPHLIPASEA2"/>
</dbReference>
<dbReference type="SMART" id="SM00085">
    <property type="entry name" value="PA2c"/>
    <property type="match status" value="1"/>
</dbReference>
<dbReference type="SUPFAM" id="SSF48619">
    <property type="entry name" value="Phospholipase A2, PLA2"/>
    <property type="match status" value="1"/>
</dbReference>
<dbReference type="PROSITE" id="PS00119">
    <property type="entry name" value="PA2_ASP"/>
    <property type="match status" value="1"/>
</dbReference>
<dbReference type="PROSITE" id="PS00118">
    <property type="entry name" value="PA2_HIS"/>
    <property type="match status" value="1"/>
</dbReference>
<evidence type="ECO:0000250" key="1"/>
<evidence type="ECO:0000255" key="2"/>
<evidence type="ECO:0000255" key="3">
    <source>
        <dbReference type="PROSITE-ProRule" id="PRU10035"/>
    </source>
</evidence>
<evidence type="ECO:0000255" key="4">
    <source>
        <dbReference type="PROSITE-ProRule" id="PRU10036"/>
    </source>
</evidence>
<evidence type="ECO:0000305" key="5"/>
<protein>
    <recommendedName>
        <fullName>Phospholipase A2 PS22</fullName>
        <shortName>svPLA2</shortName>
        <ecNumber>3.1.1.4</ecNumber>
    </recommendedName>
    <alternativeName>
        <fullName>Phosphatidylcholine 2-acylhydrolase</fullName>
    </alternativeName>
</protein>
<keyword id="KW-0106">Calcium</keyword>
<keyword id="KW-1015">Disulfide bond</keyword>
<keyword id="KW-1199">Hemostasis impairing toxin</keyword>
<keyword id="KW-0378">Hydrolase</keyword>
<keyword id="KW-0442">Lipid degradation</keyword>
<keyword id="KW-0443">Lipid metabolism</keyword>
<keyword id="KW-0479">Metal-binding</keyword>
<keyword id="KW-1201">Platelet aggregation inhibiting toxin</keyword>
<keyword id="KW-0964">Secreted</keyword>
<keyword id="KW-0732">Signal</keyword>
<keyword id="KW-0800">Toxin</keyword>
<accession>F8J2D2</accession>
<sequence length="146" mass="16011">MYPAHLLVLLAVCVSLLGAASVPPQPLNLVQFGYLIQCANHGSRATWHYMDYGCYCGAGGSGTPVDDLDRCCKIHDDCYGDAEKKGCSPKMLAYDYYCGENGPYCKNIKKECQRFVCACDVQAAKCFAGAPYNDANWNIDTTKHCQ</sequence>
<proteinExistence type="evidence at protein level"/>
<comment type="function">
    <text evidence="1">Snake venom phospholipase A2 (PLA2) that inhibits collagen-induced platelet aggregation. PLA2 catalyzes the calcium-dependent hydrolysis of the 2-acyl groups in 3-sn-phosphoglycerides (By similarity).</text>
</comment>
<comment type="catalytic activity">
    <reaction evidence="3 4">
        <text>a 1,2-diacyl-sn-glycero-3-phosphocholine + H2O = a 1-acyl-sn-glycero-3-phosphocholine + a fatty acid + H(+)</text>
        <dbReference type="Rhea" id="RHEA:15801"/>
        <dbReference type="ChEBI" id="CHEBI:15377"/>
        <dbReference type="ChEBI" id="CHEBI:15378"/>
        <dbReference type="ChEBI" id="CHEBI:28868"/>
        <dbReference type="ChEBI" id="CHEBI:57643"/>
        <dbReference type="ChEBI" id="CHEBI:58168"/>
        <dbReference type="EC" id="3.1.1.4"/>
    </reaction>
</comment>
<comment type="cofactor">
    <cofactor evidence="1">
        <name>Ca(2+)</name>
        <dbReference type="ChEBI" id="CHEBI:29108"/>
    </cofactor>
    <text evidence="1">Binds 1 Ca(2+) ion.</text>
</comment>
<comment type="subcellular location">
    <subcellularLocation>
        <location>Secreted</location>
    </subcellularLocation>
</comment>
<comment type="tissue specificity">
    <text>Expressed by the venom gland.</text>
</comment>
<comment type="similarity">
    <text evidence="5">Belongs to the phospholipase A2 family. Group I subfamily. D49 sub-subfamily.</text>
</comment>
<name>PA222_DRYCN</name>
<feature type="signal peptide" evidence="2">
    <location>
        <begin position="1"/>
        <end position="19"/>
    </location>
</feature>
<feature type="propeptide" id="PRO_0000425510" evidence="1">
    <location>
        <begin position="20"/>
        <end position="27"/>
    </location>
</feature>
<feature type="chain" id="PRO_0000425511" description="Phospholipase A2 PS22">
    <location>
        <begin position="28"/>
        <end position="146"/>
    </location>
</feature>
<feature type="active site" evidence="1">
    <location>
        <position position="75"/>
    </location>
</feature>
<feature type="active site" evidence="1">
    <location>
        <position position="120"/>
    </location>
</feature>
<feature type="binding site" evidence="1">
    <location>
        <position position="55"/>
    </location>
    <ligand>
        <name>Ca(2+)</name>
        <dbReference type="ChEBI" id="CHEBI:29108"/>
    </ligand>
</feature>
<feature type="binding site" evidence="1">
    <location>
        <position position="57"/>
    </location>
    <ligand>
        <name>Ca(2+)</name>
        <dbReference type="ChEBI" id="CHEBI:29108"/>
    </ligand>
</feature>
<feature type="binding site" evidence="1">
    <location>
        <position position="59"/>
    </location>
    <ligand>
        <name>Ca(2+)</name>
        <dbReference type="ChEBI" id="CHEBI:29108"/>
    </ligand>
</feature>
<feature type="binding site" evidence="1">
    <location>
        <position position="76"/>
    </location>
    <ligand>
        <name>Ca(2+)</name>
        <dbReference type="ChEBI" id="CHEBI:29108"/>
    </ligand>
</feature>
<feature type="disulfide bond" evidence="1">
    <location>
        <begin position="38"/>
        <end position="98"/>
    </location>
</feature>
<feature type="disulfide bond" evidence="1">
    <location>
        <begin position="54"/>
        <end position="145"/>
    </location>
</feature>
<feature type="disulfide bond" evidence="1">
    <location>
        <begin position="56"/>
        <end position="72"/>
    </location>
</feature>
<feature type="disulfide bond" evidence="1">
    <location>
        <begin position="71"/>
        <end position="126"/>
    </location>
</feature>
<feature type="disulfide bond" evidence="1">
    <location>
        <begin position="78"/>
        <end position="119"/>
    </location>
</feature>
<feature type="disulfide bond" evidence="1">
    <location>
        <begin position="87"/>
        <end position="112"/>
    </location>
</feature>
<feature type="disulfide bond" evidence="1">
    <location>
        <begin position="105"/>
        <end position="117"/>
    </location>
</feature>